<dbReference type="EMBL" id="KN275960">
    <property type="protein sequence ID" value="EEH47718.2"/>
    <property type="status" value="ALT_SEQ"/>
    <property type="molecule type" value="Genomic_DNA"/>
</dbReference>
<dbReference type="RefSeq" id="XP_010759184.1">
    <property type="nucleotide sequence ID" value="XM_010760882.1"/>
</dbReference>
<dbReference type="SMR" id="C1G966"/>
<dbReference type="FunCoup" id="C1G966">
    <property type="interactions" value="189"/>
</dbReference>
<dbReference type="GeneID" id="22583044"/>
<dbReference type="KEGG" id="pbn:PADG_03802"/>
<dbReference type="eggNOG" id="ENOG502R1M5">
    <property type="taxonomic scope" value="Eukaryota"/>
</dbReference>
<dbReference type="HOGENOM" id="CLU_010748_1_0_1"/>
<dbReference type="InParanoid" id="C1G966"/>
<dbReference type="OrthoDB" id="37302at33183"/>
<dbReference type="Proteomes" id="UP000001628">
    <property type="component" value="Unassembled WGS sequence"/>
</dbReference>
<dbReference type="GO" id="GO:0005634">
    <property type="term" value="C:nucleus"/>
    <property type="evidence" value="ECO:0007669"/>
    <property type="project" value="UniProtKB-SubCell"/>
</dbReference>
<dbReference type="GO" id="GO:0000981">
    <property type="term" value="F:DNA-binding transcription factor activity, RNA polymerase II-specific"/>
    <property type="evidence" value="ECO:0007669"/>
    <property type="project" value="InterPro"/>
</dbReference>
<dbReference type="GO" id="GO:0000977">
    <property type="term" value="F:RNA polymerase II transcription regulatory region sequence-specific DNA binding"/>
    <property type="evidence" value="ECO:0007669"/>
    <property type="project" value="TreeGrafter"/>
</dbReference>
<dbReference type="GO" id="GO:0008270">
    <property type="term" value="F:zinc ion binding"/>
    <property type="evidence" value="ECO:0007669"/>
    <property type="project" value="InterPro"/>
</dbReference>
<dbReference type="GO" id="GO:0009267">
    <property type="term" value="P:cellular response to starvation"/>
    <property type="evidence" value="ECO:0007669"/>
    <property type="project" value="TreeGrafter"/>
</dbReference>
<dbReference type="GO" id="GO:0006094">
    <property type="term" value="P:gluconeogenesis"/>
    <property type="evidence" value="ECO:0007669"/>
    <property type="project" value="UniProtKB-KW"/>
</dbReference>
<dbReference type="CDD" id="cd00067">
    <property type="entry name" value="GAL4"/>
    <property type="match status" value="1"/>
</dbReference>
<dbReference type="Gene3D" id="4.10.240.10">
    <property type="entry name" value="Zn(2)-C6 fungal-type DNA-binding domain"/>
    <property type="match status" value="1"/>
</dbReference>
<dbReference type="InterPro" id="IPR050335">
    <property type="entry name" value="ERT1_acuK_gluconeogen_tf"/>
</dbReference>
<dbReference type="InterPro" id="IPR056751">
    <property type="entry name" value="PAS_13"/>
</dbReference>
<dbReference type="InterPro" id="IPR036864">
    <property type="entry name" value="Zn2-C6_fun-type_DNA-bd_sf"/>
</dbReference>
<dbReference type="InterPro" id="IPR001138">
    <property type="entry name" value="Zn2Cys6_DnaBD"/>
</dbReference>
<dbReference type="PANTHER" id="PTHR47659:SF1">
    <property type="entry name" value="TRANSCRIPTION ACTIVATOR OF GLUCONEOGENESIS ERT1"/>
    <property type="match status" value="1"/>
</dbReference>
<dbReference type="PANTHER" id="PTHR47659">
    <property type="entry name" value="ZN(II)2CYS6 TRANSCRIPTION FACTOR (EUROFUNG)-RELATED"/>
    <property type="match status" value="1"/>
</dbReference>
<dbReference type="Pfam" id="PF24990">
    <property type="entry name" value="PAS_13"/>
    <property type="match status" value="1"/>
</dbReference>
<dbReference type="SMART" id="SM00066">
    <property type="entry name" value="GAL4"/>
    <property type="match status" value="1"/>
</dbReference>
<dbReference type="SUPFAM" id="SSF57701">
    <property type="entry name" value="Zn2/Cys6 DNA-binding domain"/>
    <property type="match status" value="1"/>
</dbReference>
<dbReference type="PROSITE" id="PS50048">
    <property type="entry name" value="ZN2_CY6_FUNGAL_2"/>
    <property type="match status" value="1"/>
</dbReference>
<organism>
    <name type="scientific">Paracoccidioides brasiliensis (strain Pb18)</name>
    <dbReference type="NCBI Taxonomy" id="502780"/>
    <lineage>
        <taxon>Eukaryota</taxon>
        <taxon>Fungi</taxon>
        <taxon>Dikarya</taxon>
        <taxon>Ascomycota</taxon>
        <taxon>Pezizomycotina</taxon>
        <taxon>Eurotiomycetes</taxon>
        <taxon>Eurotiomycetidae</taxon>
        <taxon>Onygenales</taxon>
        <taxon>Ajellomycetaceae</taxon>
        <taxon>Paracoccidioides</taxon>
    </lineage>
</organism>
<feature type="chain" id="PRO_0000406445" description="Transcription activator of gluconeogenesis PADG_03802">
    <location>
        <begin position="1"/>
        <end position="814"/>
    </location>
</feature>
<feature type="DNA-binding region" description="Zn(2)-C6 fungal-type" evidence="2">
    <location>
        <begin position="97"/>
        <end position="125"/>
    </location>
</feature>
<feature type="region of interest" description="Disordered" evidence="3">
    <location>
        <begin position="1"/>
        <end position="90"/>
    </location>
</feature>
<feature type="region of interest" description="Disordered" evidence="3">
    <location>
        <begin position="164"/>
        <end position="208"/>
    </location>
</feature>
<feature type="region of interest" description="Disordered" evidence="3">
    <location>
        <begin position="236"/>
        <end position="287"/>
    </location>
</feature>
<feature type="region of interest" description="Disordered" evidence="3">
    <location>
        <begin position="323"/>
        <end position="384"/>
    </location>
</feature>
<feature type="region of interest" description="Disordered" evidence="3">
    <location>
        <begin position="442"/>
        <end position="461"/>
    </location>
</feature>
<feature type="region of interest" description="Disordered" evidence="3">
    <location>
        <begin position="598"/>
        <end position="617"/>
    </location>
</feature>
<feature type="region of interest" description="Disordered" evidence="3">
    <location>
        <begin position="695"/>
        <end position="739"/>
    </location>
</feature>
<feature type="compositionally biased region" description="Low complexity" evidence="3">
    <location>
        <begin position="69"/>
        <end position="83"/>
    </location>
</feature>
<feature type="compositionally biased region" description="Low complexity" evidence="3">
    <location>
        <begin position="171"/>
        <end position="188"/>
    </location>
</feature>
<feature type="compositionally biased region" description="Polar residues" evidence="3">
    <location>
        <begin position="189"/>
        <end position="208"/>
    </location>
</feature>
<feature type="compositionally biased region" description="Polar residues" evidence="3">
    <location>
        <begin position="248"/>
        <end position="279"/>
    </location>
</feature>
<feature type="compositionally biased region" description="Polar residues" evidence="3">
    <location>
        <begin position="339"/>
        <end position="359"/>
    </location>
</feature>
<feature type="compositionally biased region" description="Polar residues" evidence="3">
    <location>
        <begin position="375"/>
        <end position="384"/>
    </location>
</feature>
<feature type="compositionally biased region" description="Low complexity" evidence="3">
    <location>
        <begin position="442"/>
        <end position="451"/>
    </location>
</feature>
<feature type="compositionally biased region" description="Low complexity" evidence="3">
    <location>
        <begin position="720"/>
        <end position="739"/>
    </location>
</feature>
<accession>C1G966</accession>
<reference key="1">
    <citation type="journal article" date="2011" name="PLoS Genet.">
        <title>Comparative genomic analysis of human fungal pathogens causing paracoccidioidomycosis.</title>
        <authorList>
            <person name="Desjardins C.A."/>
            <person name="Champion M.D."/>
            <person name="Holder J.W."/>
            <person name="Muszewska A."/>
            <person name="Goldberg J."/>
            <person name="Bailao A.M."/>
            <person name="Brigido M.M."/>
            <person name="Ferreira M.E."/>
            <person name="Garcia A.M."/>
            <person name="Grynberg M."/>
            <person name="Gujja S."/>
            <person name="Heiman D.I."/>
            <person name="Henn M.R."/>
            <person name="Kodira C.D."/>
            <person name="Leon-Narvaez H."/>
            <person name="Longo L.V.G."/>
            <person name="Ma L.-J."/>
            <person name="Malavazi I."/>
            <person name="Matsuo A.L."/>
            <person name="Morais F.V."/>
            <person name="Pereira M."/>
            <person name="Rodriguez-Brito S."/>
            <person name="Sakthikumar S."/>
            <person name="Salem-Izacc S.M."/>
            <person name="Sykes S.M."/>
            <person name="Teixeira M.M."/>
            <person name="Vallejo M.C."/>
            <person name="Walter M.E."/>
            <person name="Yandava C."/>
            <person name="Young S."/>
            <person name="Zeng Q."/>
            <person name="Zucker J."/>
            <person name="Felipe M.S."/>
            <person name="Goldman G.H."/>
            <person name="Haas B.J."/>
            <person name="McEwen J.G."/>
            <person name="Nino-Vega G."/>
            <person name="Puccia R."/>
            <person name="San-Blas G."/>
            <person name="Soares C.M."/>
            <person name="Birren B.W."/>
            <person name="Cuomo C.A."/>
        </authorList>
    </citation>
    <scope>NUCLEOTIDE SEQUENCE [LARGE SCALE GENOMIC DNA]</scope>
    <source>
        <strain>Pb18</strain>
    </source>
</reference>
<keyword id="KW-0010">Activator</keyword>
<keyword id="KW-0238">DNA-binding</keyword>
<keyword id="KW-0312">Gluconeogenesis</keyword>
<keyword id="KW-0479">Metal-binding</keyword>
<keyword id="KW-0539">Nucleus</keyword>
<keyword id="KW-1185">Reference proteome</keyword>
<keyword id="KW-0804">Transcription</keyword>
<keyword id="KW-0805">Transcription regulation</keyword>
<keyword id="KW-0862">Zinc</keyword>
<name>ACUK_PARBD</name>
<protein>
    <recommendedName>
        <fullName>Transcription activator of gluconeogenesis PADG_03802</fullName>
    </recommendedName>
</protein>
<comment type="function">
    <text evidence="1">Transcription factor which regulates nonfermentable carbon utilization. Activator of gluconeogenetic genes (By similarity).</text>
</comment>
<comment type="subcellular location">
    <subcellularLocation>
        <location evidence="2">Nucleus</location>
    </subcellularLocation>
</comment>
<comment type="similarity">
    <text evidence="4">Belongs to the ERT1/acuK family.</text>
</comment>
<comment type="sequence caution" evidence="4">
    <conflict type="erroneous gene model prediction">
        <sequence resource="EMBL-CDS" id="EEH47718"/>
    </conflict>
</comment>
<proteinExistence type="inferred from homology"/>
<sequence>MTSSARNGSPSPSPALPSTTTPAEQESRNTMTTANNPGDWDSSESRPQPLSNGKGVGNGMVANGHQRPSTSSTAASANNASAKDPLRPRRKKAKRACFACQRAHLTCGDERPCQRCIKRGLQDTCHDGVRKKAKYLHDAPNEALIPGIRGNLYSQAQAARNKINTNSQQRNGTNSNSDNNSTNTNSNNKPSHQDVSTNFFSTPSTNNYNTVYTQAKSRQSQHMPSRVMQDATMNPSAFQAQPPASPTFDLSSNPQNHTLSPSMAQNSGTTPSSSASQNPDPYGPTFFDPSHPALFNFDIASMNFGNRYGALEFGMLGHLATGAGDTPPSDSATRRGSIGRSSGTFTVQNFGEGSSNQSPFLFGGDPVLNDWNPAGQGQTNSRNIYNQNSVSGQMADHPHAFAIESAPMNFASPSSTESPQMTTVTQFDDPSVNFSSRTTLMPPTNTQHQQQPQPPRISTPSLKNMQVGVKRRYRSPSSIYESVKEPYSYTSGFHSLTAFIQRRFSPQKTLQIAKALASIRPSFIATTKTLNQDDLIFMEKCFQRTLWEYEDFIDACGTPTIVCRRTGEIAAVGKEFSILTGWKKEVLLGKEPNLNVNTGGSSSSGVSSRGSSTYNSRNSATMTVMDNQSLPTGRTQPVFLAELLDDDSVIEFYEDFAKLAFGDSRGSVMTTCKLLKYKTKEDGVGLFRNSNGEVSAAGGGGTAADDTDANDGAGAGAGDGTTSAVNGVSNGSGNNATNVNANGNVNVIPNDLSGASSMKLSPKQAWGKSRIAGEAGMNQLGFRDGKVECSYCWTVKRDVFDIPMLIVMNFLPCI</sequence>
<gene>
    <name type="ORF">PADG_03802</name>
</gene>
<evidence type="ECO:0000250" key="1"/>
<evidence type="ECO:0000255" key="2">
    <source>
        <dbReference type="PROSITE-ProRule" id="PRU00227"/>
    </source>
</evidence>
<evidence type="ECO:0000256" key="3">
    <source>
        <dbReference type="SAM" id="MobiDB-lite"/>
    </source>
</evidence>
<evidence type="ECO:0000305" key="4"/>